<name>RL11_MYXXD</name>
<feature type="chain" id="PRO_0000258173" description="Large ribosomal subunit protein uL11">
    <location>
        <begin position="1"/>
        <end position="148"/>
    </location>
</feature>
<comment type="function">
    <text evidence="1">Forms part of the ribosomal stalk which helps the ribosome interact with GTP-bound translation factors.</text>
</comment>
<comment type="subunit">
    <text evidence="1">Part of the ribosomal stalk of the 50S ribosomal subunit. Interacts with L10 and the large rRNA to form the base of the stalk. L10 forms an elongated spine to which L12 dimers bind in a sequential fashion forming a multimeric L10(L12)X complex.</text>
</comment>
<comment type="PTM">
    <text evidence="1">One or more lysine residues are methylated.</text>
</comment>
<comment type="similarity">
    <text evidence="1">Belongs to the universal ribosomal protein uL11 family.</text>
</comment>
<sequence length="148" mass="15581">MKKITGQVKLQIPAGKANPAPPIGPALGQQGVNIMEFCKQFNAKTQAEAKEALIIPVVITVYADRSFTFILKTPPAAVLIKKAAGLHTEKKKGSGAKKPGKEKVGQITRAQLEEIAKKKIQDTTAASLEACMSTIAGTARSMGIDVVG</sequence>
<protein>
    <recommendedName>
        <fullName evidence="1">Large ribosomal subunit protein uL11</fullName>
    </recommendedName>
    <alternativeName>
        <fullName evidence="2">50S ribosomal protein L11</fullName>
    </alternativeName>
</protein>
<accession>Q1D7U7</accession>
<gene>
    <name evidence="1" type="primary">rplK</name>
    <name type="ordered locus">MXAN_3073</name>
</gene>
<evidence type="ECO:0000255" key="1">
    <source>
        <dbReference type="HAMAP-Rule" id="MF_00736"/>
    </source>
</evidence>
<evidence type="ECO:0000305" key="2"/>
<keyword id="KW-0488">Methylation</keyword>
<keyword id="KW-1185">Reference proteome</keyword>
<keyword id="KW-0687">Ribonucleoprotein</keyword>
<keyword id="KW-0689">Ribosomal protein</keyword>
<keyword id="KW-0694">RNA-binding</keyword>
<keyword id="KW-0699">rRNA-binding</keyword>
<organism>
    <name type="scientific">Myxococcus xanthus (strain DK1622)</name>
    <dbReference type="NCBI Taxonomy" id="246197"/>
    <lineage>
        <taxon>Bacteria</taxon>
        <taxon>Pseudomonadati</taxon>
        <taxon>Myxococcota</taxon>
        <taxon>Myxococcia</taxon>
        <taxon>Myxococcales</taxon>
        <taxon>Cystobacterineae</taxon>
        <taxon>Myxococcaceae</taxon>
        <taxon>Myxococcus</taxon>
    </lineage>
</organism>
<reference key="1">
    <citation type="journal article" date="2006" name="Proc. Natl. Acad. Sci. U.S.A.">
        <title>Evolution of sensory complexity recorded in a myxobacterial genome.</title>
        <authorList>
            <person name="Goldman B.S."/>
            <person name="Nierman W.C."/>
            <person name="Kaiser D."/>
            <person name="Slater S.C."/>
            <person name="Durkin A.S."/>
            <person name="Eisen J.A."/>
            <person name="Ronning C.M."/>
            <person name="Barbazuk W.B."/>
            <person name="Blanchard M."/>
            <person name="Field C."/>
            <person name="Halling C."/>
            <person name="Hinkle G."/>
            <person name="Iartchuk O."/>
            <person name="Kim H.S."/>
            <person name="Mackenzie C."/>
            <person name="Madupu R."/>
            <person name="Miller N."/>
            <person name="Shvartsbeyn A."/>
            <person name="Sullivan S.A."/>
            <person name="Vaudin M."/>
            <person name="Wiegand R."/>
            <person name="Kaplan H.B."/>
        </authorList>
    </citation>
    <scope>NUCLEOTIDE SEQUENCE [LARGE SCALE GENOMIC DNA]</scope>
    <source>
        <strain>DK1622</strain>
    </source>
</reference>
<proteinExistence type="inferred from homology"/>
<dbReference type="EMBL" id="CP000113">
    <property type="protein sequence ID" value="ABF86547.1"/>
    <property type="molecule type" value="Genomic_DNA"/>
</dbReference>
<dbReference type="RefSeq" id="WP_011553123.1">
    <property type="nucleotide sequence ID" value="NC_008095.1"/>
</dbReference>
<dbReference type="SMR" id="Q1D7U7"/>
<dbReference type="STRING" id="246197.MXAN_3073"/>
<dbReference type="EnsemblBacteria" id="ABF86547">
    <property type="protein sequence ID" value="ABF86547"/>
    <property type="gene ID" value="MXAN_3073"/>
</dbReference>
<dbReference type="GeneID" id="41360435"/>
<dbReference type="KEGG" id="mxa:MXAN_3073"/>
<dbReference type="eggNOG" id="COG0080">
    <property type="taxonomic scope" value="Bacteria"/>
</dbReference>
<dbReference type="HOGENOM" id="CLU_074237_2_0_7"/>
<dbReference type="OrthoDB" id="9802408at2"/>
<dbReference type="Proteomes" id="UP000002402">
    <property type="component" value="Chromosome"/>
</dbReference>
<dbReference type="GO" id="GO:0022625">
    <property type="term" value="C:cytosolic large ribosomal subunit"/>
    <property type="evidence" value="ECO:0007669"/>
    <property type="project" value="TreeGrafter"/>
</dbReference>
<dbReference type="GO" id="GO:0070180">
    <property type="term" value="F:large ribosomal subunit rRNA binding"/>
    <property type="evidence" value="ECO:0007669"/>
    <property type="project" value="UniProtKB-UniRule"/>
</dbReference>
<dbReference type="GO" id="GO:0003735">
    <property type="term" value="F:structural constituent of ribosome"/>
    <property type="evidence" value="ECO:0007669"/>
    <property type="project" value="InterPro"/>
</dbReference>
<dbReference type="GO" id="GO:0006412">
    <property type="term" value="P:translation"/>
    <property type="evidence" value="ECO:0007669"/>
    <property type="project" value="UniProtKB-UniRule"/>
</dbReference>
<dbReference type="CDD" id="cd00349">
    <property type="entry name" value="Ribosomal_L11"/>
    <property type="match status" value="1"/>
</dbReference>
<dbReference type="FunFam" id="1.10.10.250:FF:000001">
    <property type="entry name" value="50S ribosomal protein L11"/>
    <property type="match status" value="1"/>
</dbReference>
<dbReference type="FunFam" id="3.30.1550.10:FF:000001">
    <property type="entry name" value="50S ribosomal protein L11"/>
    <property type="match status" value="1"/>
</dbReference>
<dbReference type="Gene3D" id="1.10.10.250">
    <property type="entry name" value="Ribosomal protein L11, C-terminal domain"/>
    <property type="match status" value="1"/>
</dbReference>
<dbReference type="Gene3D" id="3.30.1550.10">
    <property type="entry name" value="Ribosomal protein L11/L12, N-terminal domain"/>
    <property type="match status" value="1"/>
</dbReference>
<dbReference type="HAMAP" id="MF_00736">
    <property type="entry name" value="Ribosomal_uL11"/>
    <property type="match status" value="1"/>
</dbReference>
<dbReference type="InterPro" id="IPR000911">
    <property type="entry name" value="Ribosomal_uL11"/>
</dbReference>
<dbReference type="InterPro" id="IPR006519">
    <property type="entry name" value="Ribosomal_uL11_bac-typ"/>
</dbReference>
<dbReference type="InterPro" id="IPR020783">
    <property type="entry name" value="Ribosomal_uL11_C"/>
</dbReference>
<dbReference type="InterPro" id="IPR036769">
    <property type="entry name" value="Ribosomal_uL11_C_sf"/>
</dbReference>
<dbReference type="InterPro" id="IPR020784">
    <property type="entry name" value="Ribosomal_uL11_N"/>
</dbReference>
<dbReference type="InterPro" id="IPR036796">
    <property type="entry name" value="Ribosomal_uL11_N_sf"/>
</dbReference>
<dbReference type="NCBIfam" id="TIGR01632">
    <property type="entry name" value="L11_bact"/>
    <property type="match status" value="1"/>
</dbReference>
<dbReference type="PANTHER" id="PTHR11661">
    <property type="entry name" value="60S RIBOSOMAL PROTEIN L12"/>
    <property type="match status" value="1"/>
</dbReference>
<dbReference type="PANTHER" id="PTHR11661:SF1">
    <property type="entry name" value="LARGE RIBOSOMAL SUBUNIT PROTEIN UL11M"/>
    <property type="match status" value="1"/>
</dbReference>
<dbReference type="Pfam" id="PF00298">
    <property type="entry name" value="Ribosomal_L11"/>
    <property type="match status" value="1"/>
</dbReference>
<dbReference type="Pfam" id="PF03946">
    <property type="entry name" value="Ribosomal_L11_N"/>
    <property type="match status" value="1"/>
</dbReference>
<dbReference type="SMART" id="SM00649">
    <property type="entry name" value="RL11"/>
    <property type="match status" value="1"/>
</dbReference>
<dbReference type="SUPFAM" id="SSF54747">
    <property type="entry name" value="Ribosomal L11/L12e N-terminal domain"/>
    <property type="match status" value="1"/>
</dbReference>
<dbReference type="SUPFAM" id="SSF46906">
    <property type="entry name" value="Ribosomal protein L11, C-terminal domain"/>
    <property type="match status" value="1"/>
</dbReference>